<comment type="function">
    <text evidence="1">Specifically methylates the guanosine in position 1516 of 16S rRNA.</text>
</comment>
<comment type="catalytic activity">
    <reaction evidence="1">
        <text>guanosine(1516) in 16S rRNA + S-adenosyl-L-methionine = N(2)-methylguanosine(1516) in 16S rRNA + S-adenosyl-L-homocysteine + H(+)</text>
        <dbReference type="Rhea" id="RHEA:43220"/>
        <dbReference type="Rhea" id="RHEA-COMP:10412"/>
        <dbReference type="Rhea" id="RHEA-COMP:10413"/>
        <dbReference type="ChEBI" id="CHEBI:15378"/>
        <dbReference type="ChEBI" id="CHEBI:57856"/>
        <dbReference type="ChEBI" id="CHEBI:59789"/>
        <dbReference type="ChEBI" id="CHEBI:74269"/>
        <dbReference type="ChEBI" id="CHEBI:74481"/>
        <dbReference type="EC" id="2.1.1.242"/>
    </reaction>
</comment>
<comment type="subcellular location">
    <subcellularLocation>
        <location evidence="1">Cytoplasm</location>
    </subcellularLocation>
</comment>
<comment type="similarity">
    <text evidence="1">Belongs to the methyltransferase superfamily. RsmJ family.</text>
</comment>
<feature type="chain" id="PRO_0000316251" description="Ribosomal RNA small subunit methyltransferase J">
    <location>
        <begin position="1"/>
        <end position="250"/>
    </location>
</feature>
<feature type="binding site" evidence="1">
    <location>
        <begin position="101"/>
        <end position="102"/>
    </location>
    <ligand>
        <name>S-adenosyl-L-methionine</name>
        <dbReference type="ChEBI" id="CHEBI:59789"/>
    </ligand>
</feature>
<feature type="binding site" evidence="1">
    <location>
        <begin position="117"/>
        <end position="118"/>
    </location>
    <ligand>
        <name>S-adenosyl-L-methionine</name>
        <dbReference type="ChEBI" id="CHEBI:59789"/>
    </ligand>
</feature>
<feature type="binding site" evidence="1">
    <location>
        <begin position="153"/>
        <end position="154"/>
    </location>
    <ligand>
        <name>S-adenosyl-L-methionine</name>
        <dbReference type="ChEBI" id="CHEBI:59789"/>
    </ligand>
</feature>
<feature type="binding site" evidence="1">
    <location>
        <position position="171"/>
    </location>
    <ligand>
        <name>S-adenosyl-L-methionine</name>
        <dbReference type="ChEBI" id="CHEBI:59789"/>
    </ligand>
</feature>
<dbReference type="EC" id="2.1.1.242" evidence="1"/>
<dbReference type="EMBL" id="CP000783">
    <property type="protein sequence ID" value="ABU79405.1"/>
    <property type="molecule type" value="Genomic_DNA"/>
</dbReference>
<dbReference type="RefSeq" id="WP_012126331.1">
    <property type="nucleotide sequence ID" value="NC_009778.1"/>
</dbReference>
<dbReference type="SMR" id="A7MKM8"/>
<dbReference type="KEGG" id="esa:ESA_04225"/>
<dbReference type="PATRIC" id="fig|290339.8.peg.3760"/>
<dbReference type="HOGENOM" id="CLU_076324_0_0_6"/>
<dbReference type="Proteomes" id="UP000000260">
    <property type="component" value="Chromosome"/>
</dbReference>
<dbReference type="GO" id="GO:0005737">
    <property type="term" value="C:cytoplasm"/>
    <property type="evidence" value="ECO:0007669"/>
    <property type="project" value="UniProtKB-SubCell"/>
</dbReference>
<dbReference type="GO" id="GO:0008990">
    <property type="term" value="F:rRNA (guanine-N2-)-methyltransferase activity"/>
    <property type="evidence" value="ECO:0007669"/>
    <property type="project" value="UniProtKB-UniRule"/>
</dbReference>
<dbReference type="CDD" id="cd02440">
    <property type="entry name" value="AdoMet_MTases"/>
    <property type="match status" value="1"/>
</dbReference>
<dbReference type="Gene3D" id="3.40.50.150">
    <property type="entry name" value="Vaccinia Virus protein VP39"/>
    <property type="match status" value="1"/>
</dbReference>
<dbReference type="Gene3D" id="3.40.1630.10">
    <property type="entry name" value="YhiQ-like domain"/>
    <property type="match status" value="1"/>
</dbReference>
<dbReference type="HAMAP" id="MF_01523">
    <property type="entry name" value="16SrRNA_methyltr_J"/>
    <property type="match status" value="1"/>
</dbReference>
<dbReference type="InterPro" id="IPR007536">
    <property type="entry name" value="16SrRNA_methylTrfase_J"/>
</dbReference>
<dbReference type="InterPro" id="IPR029063">
    <property type="entry name" value="SAM-dependent_MTases_sf"/>
</dbReference>
<dbReference type="NCBIfam" id="NF008012">
    <property type="entry name" value="PRK10742.1"/>
    <property type="match status" value="1"/>
</dbReference>
<dbReference type="PANTHER" id="PTHR36112">
    <property type="entry name" value="RIBOSOMAL RNA SMALL SUBUNIT METHYLTRANSFERASE J"/>
    <property type="match status" value="1"/>
</dbReference>
<dbReference type="PANTHER" id="PTHR36112:SF1">
    <property type="entry name" value="RIBOSOMAL RNA SMALL SUBUNIT METHYLTRANSFERASE J"/>
    <property type="match status" value="1"/>
</dbReference>
<dbReference type="Pfam" id="PF04445">
    <property type="entry name" value="SAM_MT"/>
    <property type="match status" value="1"/>
</dbReference>
<dbReference type="SUPFAM" id="SSF53335">
    <property type="entry name" value="S-adenosyl-L-methionine-dependent methyltransferases"/>
    <property type="match status" value="1"/>
</dbReference>
<name>RSMJ_CROS8</name>
<reference key="1">
    <citation type="journal article" date="2010" name="PLoS ONE">
        <title>Genome sequence of Cronobacter sakazakii BAA-894 and comparative genomic hybridization analysis with other Cronobacter species.</title>
        <authorList>
            <person name="Kucerova E."/>
            <person name="Clifton S.W."/>
            <person name="Xia X.Q."/>
            <person name="Long F."/>
            <person name="Porwollik S."/>
            <person name="Fulton L."/>
            <person name="Fronick C."/>
            <person name="Minx P."/>
            <person name="Kyung K."/>
            <person name="Warren W."/>
            <person name="Fulton R."/>
            <person name="Feng D."/>
            <person name="Wollam A."/>
            <person name="Shah N."/>
            <person name="Bhonagiri V."/>
            <person name="Nash W.E."/>
            <person name="Hallsworth-Pepin K."/>
            <person name="Wilson R.K."/>
            <person name="McClelland M."/>
            <person name="Forsythe S.J."/>
        </authorList>
    </citation>
    <scope>NUCLEOTIDE SEQUENCE [LARGE SCALE GENOMIC DNA]</scope>
    <source>
        <strain>ATCC BAA-894</strain>
    </source>
</reference>
<keyword id="KW-0963">Cytoplasm</keyword>
<keyword id="KW-0489">Methyltransferase</keyword>
<keyword id="KW-1185">Reference proteome</keyword>
<keyword id="KW-0698">rRNA processing</keyword>
<keyword id="KW-0949">S-adenosyl-L-methionine</keyword>
<keyword id="KW-0808">Transferase</keyword>
<proteinExistence type="inferred from homology"/>
<accession>A7MKM8</accession>
<protein>
    <recommendedName>
        <fullName evidence="1">Ribosomal RNA small subunit methyltransferase J</fullName>
        <ecNumber evidence="1">2.1.1.242</ecNumber>
    </recommendedName>
    <alternativeName>
        <fullName evidence="1">16S rRNA m2G1516 methyltransferase</fullName>
    </alternativeName>
    <alternativeName>
        <fullName evidence="1">rRNA (guanine-N(2)-)-methyltransferase</fullName>
    </alternativeName>
</protein>
<gene>
    <name evidence="1" type="primary">rsmJ</name>
    <name type="ordered locus">ESA_04225</name>
</gene>
<organism>
    <name type="scientific">Cronobacter sakazakii (strain ATCC BAA-894)</name>
    <name type="common">Enterobacter sakazakii</name>
    <dbReference type="NCBI Taxonomy" id="290339"/>
    <lineage>
        <taxon>Bacteria</taxon>
        <taxon>Pseudomonadati</taxon>
        <taxon>Pseudomonadota</taxon>
        <taxon>Gammaproteobacteria</taxon>
        <taxon>Enterobacterales</taxon>
        <taxon>Enterobacteriaceae</taxon>
        <taxon>Cronobacter</taxon>
    </lineage>
</organism>
<evidence type="ECO:0000255" key="1">
    <source>
        <dbReference type="HAMAP-Rule" id="MF_01523"/>
    </source>
</evidence>
<sequence>MNICLIDETGAGDGALSVLAARWGLTHDADNPMALVMTSARLELRKRDEPKLGGIFVDFVEGAMAHRRKFGGGRGEAVAKAVGIKGSYLPQVVDATAGLGRDAFVLASVGCHVRMLERNPVVAALLDDGLARGYQDAEIGPWLRERLQLIHASSLTALEAITPRPDVVYLDPMFPHKQKSALVKKEMRVFQSLVGPDLDADGLLAPARRLAIKRVVVKRPDYAPPLGDVATPNAVVTKGHRFDIYTGTPA</sequence>